<keyword id="KW-0378">Hydrolase</keyword>
<keyword id="KW-0479">Metal-binding</keyword>
<proteinExistence type="inferred from homology"/>
<accession>B1XEG2</accession>
<reference key="1">
    <citation type="journal article" date="2008" name="J. Bacteriol.">
        <title>The complete genome sequence of Escherichia coli DH10B: insights into the biology of a laboratory workhorse.</title>
        <authorList>
            <person name="Durfee T."/>
            <person name="Nelson R."/>
            <person name="Baldwin S."/>
            <person name="Plunkett G. III"/>
            <person name="Burland V."/>
            <person name="Mau B."/>
            <person name="Petrosino J.F."/>
            <person name="Qin X."/>
            <person name="Muzny D.M."/>
            <person name="Ayele M."/>
            <person name="Gibbs R.A."/>
            <person name="Csorgo B."/>
            <person name="Posfai G."/>
            <person name="Weinstock G.M."/>
            <person name="Blattner F.R."/>
        </authorList>
    </citation>
    <scope>NUCLEOTIDE SEQUENCE [LARGE SCALE GENOMIC DNA]</scope>
    <source>
        <strain>K12 / DH10B</strain>
    </source>
</reference>
<gene>
    <name evidence="1" type="primary">hyuA</name>
    <name type="ordered locus">ECDH10B_3048</name>
</gene>
<dbReference type="EC" id="3.5.2.-" evidence="1"/>
<dbReference type="EMBL" id="CP000948">
    <property type="protein sequence ID" value="ACB03978.1"/>
    <property type="molecule type" value="Genomic_DNA"/>
</dbReference>
<dbReference type="RefSeq" id="WP_001264442.1">
    <property type="nucleotide sequence ID" value="NC_010473.1"/>
</dbReference>
<dbReference type="SMR" id="B1XEG2"/>
<dbReference type="KEGG" id="ecd:ECDH10B_3048"/>
<dbReference type="HOGENOM" id="CLU_015572_2_0_6"/>
<dbReference type="GO" id="GO:0005829">
    <property type="term" value="C:cytosol"/>
    <property type="evidence" value="ECO:0007669"/>
    <property type="project" value="TreeGrafter"/>
</dbReference>
<dbReference type="GO" id="GO:0016812">
    <property type="term" value="F:hydrolase activity, acting on carbon-nitrogen (but not peptide) bonds, in cyclic amides"/>
    <property type="evidence" value="ECO:0007669"/>
    <property type="project" value="UniProtKB-UniRule"/>
</dbReference>
<dbReference type="GO" id="GO:0046872">
    <property type="term" value="F:metal ion binding"/>
    <property type="evidence" value="ECO:0007669"/>
    <property type="project" value="UniProtKB-KW"/>
</dbReference>
<dbReference type="GO" id="GO:0006208">
    <property type="term" value="P:pyrimidine nucleobase catabolic process"/>
    <property type="evidence" value="ECO:0007669"/>
    <property type="project" value="InterPro"/>
</dbReference>
<dbReference type="CDD" id="cd01314">
    <property type="entry name" value="D-HYD"/>
    <property type="match status" value="1"/>
</dbReference>
<dbReference type="FunFam" id="3.20.20.140:FF:000026">
    <property type="entry name" value="D-phenylhydantoinase"/>
    <property type="match status" value="1"/>
</dbReference>
<dbReference type="Gene3D" id="3.20.20.140">
    <property type="entry name" value="Metal-dependent hydrolases"/>
    <property type="match status" value="1"/>
</dbReference>
<dbReference type="Gene3D" id="2.30.40.10">
    <property type="entry name" value="Urease, subunit C, domain 1"/>
    <property type="match status" value="1"/>
</dbReference>
<dbReference type="HAMAP" id="MF_01644">
    <property type="entry name" value="D_hydantoinase"/>
    <property type="match status" value="1"/>
</dbReference>
<dbReference type="InterPro" id="IPR006680">
    <property type="entry name" value="Amidohydro-rel"/>
</dbReference>
<dbReference type="InterPro" id="IPR023766">
    <property type="entry name" value="D_phenylhydantoinase"/>
</dbReference>
<dbReference type="InterPro" id="IPR011778">
    <property type="entry name" value="Hydantoinase/dihydroPyrase"/>
</dbReference>
<dbReference type="InterPro" id="IPR011059">
    <property type="entry name" value="Metal-dep_hydrolase_composite"/>
</dbReference>
<dbReference type="InterPro" id="IPR032466">
    <property type="entry name" value="Metal_Hydrolase"/>
</dbReference>
<dbReference type="InterPro" id="IPR050378">
    <property type="entry name" value="Metallo-dep_Hydrolases_sf"/>
</dbReference>
<dbReference type="NCBIfam" id="TIGR02033">
    <property type="entry name" value="D-hydantoinase"/>
    <property type="match status" value="1"/>
</dbReference>
<dbReference type="PANTHER" id="PTHR11647:SF1">
    <property type="entry name" value="COLLAPSIN RESPONSE MEDIATOR PROTEIN"/>
    <property type="match status" value="1"/>
</dbReference>
<dbReference type="PANTHER" id="PTHR11647">
    <property type="entry name" value="HYDRANTOINASE/DIHYDROPYRIMIDINASE FAMILY MEMBER"/>
    <property type="match status" value="1"/>
</dbReference>
<dbReference type="Pfam" id="PF01979">
    <property type="entry name" value="Amidohydro_1"/>
    <property type="match status" value="1"/>
</dbReference>
<dbReference type="SUPFAM" id="SSF51338">
    <property type="entry name" value="Composite domain of metallo-dependent hydrolases"/>
    <property type="match status" value="2"/>
</dbReference>
<dbReference type="SUPFAM" id="SSF51556">
    <property type="entry name" value="Metallo-dependent hydrolases"/>
    <property type="match status" value="1"/>
</dbReference>
<feature type="chain" id="PRO_1000186913" description="D-phenylhydantoinase">
    <location>
        <begin position="1"/>
        <end position="461"/>
    </location>
</feature>
<feature type="binding site" evidence="1">
    <location>
        <position position="59"/>
    </location>
    <ligand>
        <name>a divalent metal cation</name>
        <dbReference type="ChEBI" id="CHEBI:60240"/>
        <label>1</label>
    </ligand>
</feature>
<feature type="binding site" evidence="1">
    <location>
        <position position="61"/>
    </location>
    <ligand>
        <name>a divalent metal cation</name>
        <dbReference type="ChEBI" id="CHEBI:60240"/>
        <label>1</label>
    </ligand>
</feature>
<feature type="binding site" description="via carbamate group" evidence="1">
    <location>
        <position position="151"/>
    </location>
    <ligand>
        <name>a divalent metal cation</name>
        <dbReference type="ChEBI" id="CHEBI:60240"/>
        <label>1</label>
    </ligand>
</feature>
<feature type="binding site" description="via carbamate group" evidence="1">
    <location>
        <position position="151"/>
    </location>
    <ligand>
        <name>a divalent metal cation</name>
        <dbReference type="ChEBI" id="CHEBI:60240"/>
        <label>2</label>
    </ligand>
</feature>
<feature type="binding site" evidence="1">
    <location>
        <position position="156"/>
    </location>
    <ligand>
        <name>substrate</name>
    </ligand>
</feature>
<feature type="binding site" evidence="1">
    <location>
        <position position="182"/>
    </location>
    <ligand>
        <name>a divalent metal cation</name>
        <dbReference type="ChEBI" id="CHEBI:60240"/>
        <label>2</label>
    </ligand>
</feature>
<feature type="binding site" evidence="1">
    <location>
        <position position="239"/>
    </location>
    <ligand>
        <name>a divalent metal cation</name>
        <dbReference type="ChEBI" id="CHEBI:60240"/>
        <label>2</label>
    </ligand>
</feature>
<feature type="binding site" evidence="1">
    <location>
        <position position="286"/>
    </location>
    <ligand>
        <name>substrate</name>
    </ligand>
</feature>
<feature type="binding site" evidence="1">
    <location>
        <position position="313"/>
    </location>
    <ligand>
        <name>a divalent metal cation</name>
        <dbReference type="ChEBI" id="CHEBI:60240"/>
        <label>1</label>
    </ligand>
</feature>
<feature type="binding site" evidence="1">
    <location>
        <position position="335"/>
    </location>
    <ligand>
        <name>substrate</name>
    </ligand>
</feature>
<feature type="modified residue" description="N6-carboxylysine" evidence="1">
    <location>
        <position position="151"/>
    </location>
</feature>
<name>PHYDA_ECODH</name>
<comment type="function">
    <text evidence="1">Catalyzes the stereospecific hydrolysis of the cyclic amide bond of D-hydantoin derivatives with an aromatic side chains at the 5'-position. Has no activity on dihydropyrimidines. The physiological function is unknown.</text>
</comment>
<comment type="catalytic activity">
    <reaction evidence="1">
        <text>D-5-phenylhydantoin + H2O = N-carbamoyl-D-phenylglycine + H(+)</text>
        <dbReference type="Rhea" id="RHEA:51664"/>
        <dbReference type="ChEBI" id="CHEBI:15377"/>
        <dbReference type="ChEBI" id="CHEBI:15378"/>
        <dbReference type="ChEBI" id="CHEBI:140750"/>
        <dbReference type="ChEBI" id="CHEBI:140758"/>
    </reaction>
</comment>
<comment type="cofactor">
    <cofactor evidence="1">
        <name>a divalent metal cation</name>
        <dbReference type="ChEBI" id="CHEBI:60240"/>
    </cofactor>
    <text evidence="1">Binds 2 divalent metal cations per subunit.</text>
</comment>
<comment type="subunit">
    <text evidence="1">Homotetramer.</text>
</comment>
<comment type="PTM">
    <text evidence="1">Carboxylation allows a single lysine to coordinate two divalent metal cations.</text>
</comment>
<comment type="similarity">
    <text evidence="1">Belongs to the metallo-dependent hydrolases superfamily. Hydantoinase/dihydropyrimidinase family.</text>
</comment>
<sequence>MRVLIKNGTVVNADGQAKQDLLIESGIVRQLGNNISPQLPYEEIDATGCYVFPGGVDVHTHFNIDVGIARSCDDFFTGTRAAACGGTTTIIDHMGFGPNGCRLRHQLEVYRGYAAHKAVIDYSFHGVIQHINHAILDEIPMIVEEGLSSFKLYLTYQYKLNDDEVLQALRRLHESGALTTVHPENDAAIASKRAEFIAAGLTAPRYHALSRPLECEAEAIARMINLAQIAGNAPLYIVHLSNGLGLDYLRLARANHQPVWVETCPQYLLLDERSYDTEDGMKFILSPPLRNVREQDKLWCGISDGAIDVVATDHCTFSMAQRLQISKGDFSRCPNGLPGVENRMQLLFSSGVMTGRITPERFVELTSAMPARLFGLWPQKGLLAPGSDGDVVIIDPRQSQQIQHRHLHDNADYSPWEGFTCQGAIVRTLSRGETIFCDGTFTGKAGRGRFLRRKPFVPPVL</sequence>
<organism>
    <name type="scientific">Escherichia coli (strain K12 / DH10B)</name>
    <dbReference type="NCBI Taxonomy" id="316385"/>
    <lineage>
        <taxon>Bacteria</taxon>
        <taxon>Pseudomonadati</taxon>
        <taxon>Pseudomonadota</taxon>
        <taxon>Gammaproteobacteria</taxon>
        <taxon>Enterobacterales</taxon>
        <taxon>Enterobacteriaceae</taxon>
        <taxon>Escherichia</taxon>
    </lineage>
</organism>
<protein>
    <recommendedName>
        <fullName evidence="1">D-phenylhydantoinase</fullName>
        <ecNumber evidence="1">3.5.2.-</ecNumber>
    </recommendedName>
    <alternativeName>
        <fullName evidence="1">Hydantoin-utilizing enzyme HyuA</fullName>
    </alternativeName>
</protein>
<evidence type="ECO:0000255" key="1">
    <source>
        <dbReference type="HAMAP-Rule" id="MF_01644"/>
    </source>
</evidence>